<accession>P85224</accession>
<keyword id="KW-0204">Cytolysis</keyword>
<keyword id="KW-0903">Direct protein sequencing</keyword>
<keyword id="KW-0291">Formylation</keyword>
<keyword id="KW-0354">Hemolysis</keyword>
<keyword id="KW-0964">Secreted</keyword>
<keyword id="KW-0800">Toxin</keyword>
<keyword id="KW-0843">Virulence</keyword>
<dbReference type="RefSeq" id="WP_019469020.1">
    <property type="nucleotide sequence ID" value="NZ_PPRL01000021.1"/>
</dbReference>
<dbReference type="SMR" id="P85224"/>
<dbReference type="GeneID" id="78333397"/>
<dbReference type="GO" id="GO:0005576">
    <property type="term" value="C:extracellular region"/>
    <property type="evidence" value="ECO:0007669"/>
    <property type="project" value="UniProtKB-SubCell"/>
</dbReference>
<dbReference type="GO" id="GO:0090729">
    <property type="term" value="F:toxin activity"/>
    <property type="evidence" value="ECO:0007669"/>
    <property type="project" value="UniProtKB-KW"/>
</dbReference>
<dbReference type="GO" id="GO:0031640">
    <property type="term" value="P:killing of cells of another organism"/>
    <property type="evidence" value="ECO:0007669"/>
    <property type="project" value="UniProtKB-KW"/>
</dbReference>
<dbReference type="InterPro" id="IPR008846">
    <property type="entry name" value="PSMbeta"/>
</dbReference>
<dbReference type="Pfam" id="PF05480">
    <property type="entry name" value="PSMbeta"/>
    <property type="match status" value="1"/>
</dbReference>
<evidence type="ECO:0000255" key="1"/>
<evidence type="ECO:0000269" key="2">
    <source>
    </source>
</evidence>
<evidence type="ECO:0000305" key="3"/>
<comment type="function">
    <text evidence="2">Virulence factor. Causes hemolysis of erythrocytes. Acts synergistically with beta-hemolysins from S.aureus ATCC 25923. Cytotoxic towards human dermal fibroblasts.</text>
</comment>
<comment type="subcellular location">
    <subcellularLocation>
        <location evidence="2">Secreted</location>
    </subcellularLocation>
</comment>
<comment type="similarity">
    <text evidence="1">Belongs to the staphylococcal hemolytic protein family.</text>
</comment>
<reference evidence="3" key="1">
    <citation type="journal article" date="2008" name="FEMS Microbiol. Lett.">
        <title>The amino acid sequences and activities of synergistic hemolysins from Staphylococcus cohnii.</title>
        <authorList>
            <person name="Mak P."/>
            <person name="Maszewska A."/>
            <person name="Rozalska M."/>
        </authorList>
    </citation>
    <scope>PROTEIN SEQUENCE</scope>
    <scope>FUNCTION</scope>
    <scope>SUBCELLULAR LOCATION</scope>
    <scope>FORMYLATION AT MET-1</scope>
    <source>
        <strain evidence="2">ZMF 535</strain>
    </source>
</reference>
<name>HLY3U_STAUR</name>
<proteinExistence type="evidence at protein level"/>
<organism>
    <name type="scientific">Staphylococcus ureilyticus</name>
    <name type="common">Staphylococcus cohnii subsp. urealyticus</name>
    <dbReference type="NCBI Taxonomy" id="94138"/>
    <lineage>
        <taxon>Bacteria</taxon>
        <taxon>Bacillati</taxon>
        <taxon>Bacillota</taxon>
        <taxon>Bacilli</taxon>
        <taxon>Bacillales</taxon>
        <taxon>Staphylococcaceae</taxon>
        <taxon>Staphylococcus</taxon>
        <taxon>Staphylococcus cohnii species complex</taxon>
    </lineage>
</organism>
<sequence>MSDFVNAISEAVKAGLSADWVTMGTSIADALAKGADFILGFFN</sequence>
<protein>
    <recommendedName>
        <fullName>Hemolysin H3U</fullName>
    </recommendedName>
</protein>
<feature type="peptide" id="PRO_0000302134" description="Hemolysin H3U">
    <location>
        <begin position="1"/>
        <end position="43"/>
    </location>
</feature>
<feature type="modified residue" description="N-formylmethionine" evidence="2">
    <location>
        <position position="1"/>
    </location>
</feature>